<reference key="1">
    <citation type="submission" date="1997-08" db="EMBL/GenBank/DDBJ databases">
        <title>petB and petD from Picea abies.</title>
        <authorList>
            <person name="Philipps A."/>
            <person name="Sutter A."/>
            <person name="Wild A."/>
        </authorList>
    </citation>
    <scope>NUCLEOTIDE SEQUENCE [GENOMIC DNA]</scope>
</reference>
<proteinExistence type="inferred from homology"/>
<evidence type="ECO:0000255" key="1">
    <source>
        <dbReference type="HAMAP-Rule" id="MF_00633"/>
    </source>
</evidence>
<gene>
    <name evidence="1" type="primary">petB</name>
</gene>
<sequence>LEIQAIADDITSKYVPPHVNIFYCLGGITLTSFLVQVATGSAMTFYYRPTVTEAFASVQYLMTEVNFGWLIRSIHRWSASMMVLMMILHVFRVYLTGGFKKPRELTWVTGVILGVLTVSFGVTGYSLPWDQIGYWAVKIVTGVPEAIPVIGSPLVELLRGSVSVGQSTLTRFYSLHTFILPLLTAVFMPMHFLMIRKQGIPGPL</sequence>
<dbReference type="EMBL" id="AJ001024">
    <property type="protein sequence ID" value="CAA04480.1"/>
    <property type="molecule type" value="Genomic_DNA"/>
</dbReference>
<dbReference type="PIR" id="T14834">
    <property type="entry name" value="T14834"/>
</dbReference>
<dbReference type="SMR" id="O47043"/>
<dbReference type="GO" id="GO:0009535">
    <property type="term" value="C:chloroplast thylakoid membrane"/>
    <property type="evidence" value="ECO:0007669"/>
    <property type="project" value="UniProtKB-SubCell"/>
</dbReference>
<dbReference type="GO" id="GO:0009055">
    <property type="term" value="F:electron transfer activity"/>
    <property type="evidence" value="ECO:0007669"/>
    <property type="project" value="InterPro"/>
</dbReference>
<dbReference type="GO" id="GO:0046872">
    <property type="term" value="F:metal ion binding"/>
    <property type="evidence" value="ECO:0007669"/>
    <property type="project" value="UniProtKB-KW"/>
</dbReference>
<dbReference type="GO" id="GO:0016491">
    <property type="term" value="F:oxidoreductase activity"/>
    <property type="evidence" value="ECO:0007669"/>
    <property type="project" value="InterPro"/>
</dbReference>
<dbReference type="GO" id="GO:0015979">
    <property type="term" value="P:photosynthesis"/>
    <property type="evidence" value="ECO:0007669"/>
    <property type="project" value="UniProtKB-KW"/>
</dbReference>
<dbReference type="GO" id="GO:0022904">
    <property type="term" value="P:respiratory electron transport chain"/>
    <property type="evidence" value="ECO:0007669"/>
    <property type="project" value="InterPro"/>
</dbReference>
<dbReference type="CDD" id="cd00284">
    <property type="entry name" value="Cytochrome_b_N"/>
    <property type="match status" value="1"/>
</dbReference>
<dbReference type="FunFam" id="1.20.810.10:FF:000001">
    <property type="entry name" value="Cytochrome b6"/>
    <property type="match status" value="1"/>
</dbReference>
<dbReference type="Gene3D" id="1.20.810.10">
    <property type="entry name" value="Cytochrome Bc1 Complex, Chain C"/>
    <property type="match status" value="1"/>
</dbReference>
<dbReference type="HAMAP" id="MF_00633">
    <property type="entry name" value="Cytb6_f_cytb6"/>
    <property type="match status" value="1"/>
</dbReference>
<dbReference type="InterPro" id="IPR005797">
    <property type="entry name" value="Cyt_b/b6_N"/>
</dbReference>
<dbReference type="InterPro" id="IPR023530">
    <property type="entry name" value="Cyt_B6_PetB"/>
</dbReference>
<dbReference type="InterPro" id="IPR027387">
    <property type="entry name" value="Cytb/b6-like_sf"/>
</dbReference>
<dbReference type="InterPro" id="IPR048259">
    <property type="entry name" value="Cytochrome_b_N_euk/bac"/>
</dbReference>
<dbReference type="InterPro" id="IPR016174">
    <property type="entry name" value="Di-haem_cyt_TM"/>
</dbReference>
<dbReference type="NCBIfam" id="NF002990">
    <property type="entry name" value="PRK03735.1"/>
    <property type="match status" value="1"/>
</dbReference>
<dbReference type="PANTHER" id="PTHR19271">
    <property type="entry name" value="CYTOCHROME B"/>
    <property type="match status" value="1"/>
</dbReference>
<dbReference type="PANTHER" id="PTHR19271:SF16">
    <property type="entry name" value="CYTOCHROME B"/>
    <property type="match status" value="1"/>
</dbReference>
<dbReference type="Pfam" id="PF00033">
    <property type="entry name" value="Cytochrome_B"/>
    <property type="match status" value="1"/>
</dbReference>
<dbReference type="PIRSF" id="PIRSF000032">
    <property type="entry name" value="Cytochrome_b6"/>
    <property type="match status" value="1"/>
</dbReference>
<dbReference type="SUPFAM" id="SSF81342">
    <property type="entry name" value="Transmembrane di-heme cytochromes"/>
    <property type="match status" value="1"/>
</dbReference>
<dbReference type="PROSITE" id="PS51002">
    <property type="entry name" value="CYTB_NTER"/>
    <property type="match status" value="1"/>
</dbReference>
<comment type="function">
    <text evidence="1">Component of the cytochrome b6-f complex, which mediates electron transfer between photosystem II (PSII) and photosystem I (PSI), cyclic electron flow around PSI, and state transitions.</text>
</comment>
<comment type="cofactor">
    <cofactor evidence="1">
        <name>heme b</name>
        <dbReference type="ChEBI" id="CHEBI:60344"/>
    </cofactor>
    <text evidence="1">Binds 2 heme b groups non-covalently with two histidine residues as axial ligands.</text>
</comment>
<comment type="cofactor">
    <cofactor evidence="1">
        <name>heme c</name>
        <dbReference type="ChEBI" id="CHEBI:61717"/>
    </cofactor>
    <text evidence="1">Binds one heme group covalently by a single cysteine link with no axial amino acid ligand. This heme was named heme ci.</text>
</comment>
<comment type="subunit">
    <text evidence="1">The 4 large subunits of the cytochrome b6-f complex are cytochrome b6, subunit IV (17 kDa polypeptide, PetD), cytochrome f and the Rieske protein, while the 4 small subunits are PetG, PetL, PetM and PetN. The complex functions as a dimer.</text>
</comment>
<comment type="subcellular location">
    <subcellularLocation>
        <location evidence="1">Plastid</location>
        <location evidence="1">Chloroplast thylakoid membrane</location>
        <topology evidence="1">Multi-pass membrane protein</topology>
    </subcellularLocation>
</comment>
<comment type="miscellaneous">
    <text evidence="1">Heme 1 (or BH or b566) is high-potential and absorbs at about 566 nm, and heme 2 (or BL or b562) is low-potential and absorbs at about 562 nm.</text>
</comment>
<comment type="similarity">
    <text evidence="1">Belongs to the cytochrome b family. PetB subfamily.</text>
</comment>
<accession>O47043</accession>
<organism>
    <name type="scientific">Picea abies</name>
    <name type="common">Norway spruce</name>
    <name type="synonym">Picea excelsa</name>
    <dbReference type="NCBI Taxonomy" id="3329"/>
    <lineage>
        <taxon>Eukaryota</taxon>
        <taxon>Viridiplantae</taxon>
        <taxon>Streptophyta</taxon>
        <taxon>Embryophyta</taxon>
        <taxon>Tracheophyta</taxon>
        <taxon>Spermatophyta</taxon>
        <taxon>Pinopsida</taxon>
        <taxon>Pinidae</taxon>
        <taxon>Conifers I</taxon>
        <taxon>Pinales</taxon>
        <taxon>Pinaceae</taxon>
        <taxon>Picea</taxon>
    </lineage>
</organism>
<name>CYB6_PICAB</name>
<keyword id="KW-0150">Chloroplast</keyword>
<keyword id="KW-0249">Electron transport</keyword>
<keyword id="KW-0349">Heme</keyword>
<keyword id="KW-0408">Iron</keyword>
<keyword id="KW-0472">Membrane</keyword>
<keyword id="KW-0479">Metal-binding</keyword>
<keyword id="KW-0602">Photosynthesis</keyword>
<keyword id="KW-0934">Plastid</keyword>
<keyword id="KW-0793">Thylakoid</keyword>
<keyword id="KW-0812">Transmembrane</keyword>
<keyword id="KW-1133">Transmembrane helix</keyword>
<keyword id="KW-0813">Transport</keyword>
<geneLocation type="chloroplast"/>
<protein>
    <recommendedName>
        <fullName evidence="1">Cytochrome b6</fullName>
    </recommendedName>
</protein>
<feature type="chain" id="PRO_0000061813" description="Cytochrome b6">
    <location>
        <begin position="1" status="less than"/>
        <end position="204"/>
    </location>
</feature>
<feature type="transmembrane region" description="Helical" evidence="1">
    <location>
        <begin position="23"/>
        <end position="43"/>
    </location>
</feature>
<feature type="transmembrane region" description="Helical" evidence="1">
    <location>
        <begin position="81"/>
        <end position="101"/>
    </location>
</feature>
<feature type="transmembrane region" description="Helical" evidence="1">
    <location>
        <begin position="107"/>
        <end position="127"/>
    </location>
</feature>
<feature type="transmembrane region" description="Helical" evidence="1">
    <location>
        <begin position="136"/>
        <end position="157"/>
    </location>
</feature>
<feature type="transmembrane region" description="Helical" evidence="1">
    <location>
        <begin position="177"/>
        <end position="197"/>
    </location>
</feature>
<feature type="binding site" description="covalent" evidence="1">
    <location>
        <position position="24"/>
    </location>
    <ligand>
        <name>heme c</name>
        <dbReference type="ChEBI" id="CHEBI:61717"/>
    </ligand>
</feature>
<feature type="binding site" description="axial binding residue" evidence="1">
    <location>
        <position position="75"/>
    </location>
    <ligand>
        <name>heme b</name>
        <dbReference type="ChEBI" id="CHEBI:60344"/>
        <label>2</label>
    </ligand>
    <ligandPart>
        <name>Fe</name>
        <dbReference type="ChEBI" id="CHEBI:18248"/>
    </ligandPart>
</feature>
<feature type="binding site" description="axial binding residue" evidence="1">
    <location>
        <position position="89"/>
    </location>
    <ligand>
        <name>heme b</name>
        <dbReference type="ChEBI" id="CHEBI:60344"/>
        <label>1</label>
    </ligand>
    <ligandPart>
        <name>Fe</name>
        <dbReference type="ChEBI" id="CHEBI:18248"/>
    </ligandPart>
</feature>
<feature type="binding site" description="axial binding residue" evidence="1">
    <location>
        <position position="176"/>
    </location>
    <ligand>
        <name>heme b</name>
        <dbReference type="ChEBI" id="CHEBI:60344"/>
        <label>2</label>
    </ligand>
    <ligandPart>
        <name>Fe</name>
        <dbReference type="ChEBI" id="CHEBI:18248"/>
    </ligandPart>
</feature>
<feature type="binding site" description="axial binding residue" evidence="1">
    <location>
        <position position="191"/>
    </location>
    <ligand>
        <name>heme b</name>
        <dbReference type="ChEBI" id="CHEBI:60344"/>
        <label>1</label>
    </ligand>
    <ligandPart>
        <name>Fe</name>
        <dbReference type="ChEBI" id="CHEBI:18248"/>
    </ligandPart>
</feature>
<feature type="non-terminal residue">
    <location>
        <position position="1"/>
    </location>
</feature>